<gene>
    <name evidence="1" type="primary">rplN</name>
    <name type="ordered locus">YPN_3849</name>
    <name type="ORF">YP516_4372</name>
</gene>
<evidence type="ECO:0000255" key="1">
    <source>
        <dbReference type="HAMAP-Rule" id="MF_01367"/>
    </source>
</evidence>
<evidence type="ECO:0000305" key="2"/>
<name>RL14_YERPN</name>
<dbReference type="EMBL" id="CP000305">
    <property type="protein sequence ID" value="ABG20176.1"/>
    <property type="molecule type" value="Genomic_DNA"/>
</dbReference>
<dbReference type="EMBL" id="ACNQ01000019">
    <property type="protein sequence ID" value="EEO74764.1"/>
    <property type="molecule type" value="Genomic_DNA"/>
</dbReference>
<dbReference type="RefSeq" id="WP_002213325.1">
    <property type="nucleotide sequence ID" value="NZ_ACNQ01000019.1"/>
</dbReference>
<dbReference type="SMR" id="Q1CCV4"/>
<dbReference type="GeneID" id="97454241"/>
<dbReference type="KEGG" id="ypn:YPN_3849"/>
<dbReference type="HOGENOM" id="CLU_095071_2_1_6"/>
<dbReference type="Proteomes" id="UP000008936">
    <property type="component" value="Chromosome"/>
</dbReference>
<dbReference type="GO" id="GO:0022625">
    <property type="term" value="C:cytosolic large ribosomal subunit"/>
    <property type="evidence" value="ECO:0007669"/>
    <property type="project" value="TreeGrafter"/>
</dbReference>
<dbReference type="GO" id="GO:0070180">
    <property type="term" value="F:large ribosomal subunit rRNA binding"/>
    <property type="evidence" value="ECO:0007669"/>
    <property type="project" value="TreeGrafter"/>
</dbReference>
<dbReference type="GO" id="GO:0003735">
    <property type="term" value="F:structural constituent of ribosome"/>
    <property type="evidence" value="ECO:0007669"/>
    <property type="project" value="InterPro"/>
</dbReference>
<dbReference type="GO" id="GO:0006412">
    <property type="term" value="P:translation"/>
    <property type="evidence" value="ECO:0007669"/>
    <property type="project" value="UniProtKB-UniRule"/>
</dbReference>
<dbReference type="CDD" id="cd00337">
    <property type="entry name" value="Ribosomal_uL14"/>
    <property type="match status" value="1"/>
</dbReference>
<dbReference type="FunFam" id="2.40.150.20:FF:000001">
    <property type="entry name" value="50S ribosomal protein L14"/>
    <property type="match status" value="1"/>
</dbReference>
<dbReference type="Gene3D" id="2.40.150.20">
    <property type="entry name" value="Ribosomal protein L14"/>
    <property type="match status" value="1"/>
</dbReference>
<dbReference type="HAMAP" id="MF_01367">
    <property type="entry name" value="Ribosomal_uL14"/>
    <property type="match status" value="1"/>
</dbReference>
<dbReference type="InterPro" id="IPR000218">
    <property type="entry name" value="Ribosomal_uL14"/>
</dbReference>
<dbReference type="InterPro" id="IPR005745">
    <property type="entry name" value="Ribosomal_uL14_bac-type"/>
</dbReference>
<dbReference type="InterPro" id="IPR019972">
    <property type="entry name" value="Ribosomal_uL14_CS"/>
</dbReference>
<dbReference type="InterPro" id="IPR036853">
    <property type="entry name" value="Ribosomal_uL14_sf"/>
</dbReference>
<dbReference type="NCBIfam" id="TIGR01067">
    <property type="entry name" value="rplN_bact"/>
    <property type="match status" value="1"/>
</dbReference>
<dbReference type="PANTHER" id="PTHR11761">
    <property type="entry name" value="50S/60S RIBOSOMAL PROTEIN L14/L23"/>
    <property type="match status" value="1"/>
</dbReference>
<dbReference type="PANTHER" id="PTHR11761:SF3">
    <property type="entry name" value="LARGE RIBOSOMAL SUBUNIT PROTEIN UL14M"/>
    <property type="match status" value="1"/>
</dbReference>
<dbReference type="Pfam" id="PF00238">
    <property type="entry name" value="Ribosomal_L14"/>
    <property type="match status" value="1"/>
</dbReference>
<dbReference type="SMART" id="SM01374">
    <property type="entry name" value="Ribosomal_L14"/>
    <property type="match status" value="1"/>
</dbReference>
<dbReference type="SUPFAM" id="SSF50193">
    <property type="entry name" value="Ribosomal protein L14"/>
    <property type="match status" value="1"/>
</dbReference>
<dbReference type="PROSITE" id="PS00049">
    <property type="entry name" value="RIBOSOMAL_L14"/>
    <property type="match status" value="1"/>
</dbReference>
<reference key="1">
    <citation type="journal article" date="2006" name="J. Bacteriol.">
        <title>Complete genome sequence of Yersinia pestis strains Antiqua and Nepal516: evidence of gene reduction in an emerging pathogen.</title>
        <authorList>
            <person name="Chain P.S.G."/>
            <person name="Hu P."/>
            <person name="Malfatti S.A."/>
            <person name="Radnedge L."/>
            <person name="Larimer F."/>
            <person name="Vergez L.M."/>
            <person name="Worsham P."/>
            <person name="Chu M.C."/>
            <person name="Andersen G.L."/>
        </authorList>
    </citation>
    <scope>NUCLEOTIDE SEQUENCE [LARGE SCALE GENOMIC DNA]</scope>
    <source>
        <strain>Nepal516</strain>
    </source>
</reference>
<reference key="2">
    <citation type="submission" date="2009-04" db="EMBL/GenBank/DDBJ databases">
        <title>Yersinia pestis Nepal516A whole genome shotgun sequencing project.</title>
        <authorList>
            <person name="Plunkett G. III"/>
            <person name="Anderson B.D."/>
            <person name="Baumler D.J."/>
            <person name="Burland V."/>
            <person name="Cabot E.L."/>
            <person name="Glasner J.D."/>
            <person name="Mau B."/>
            <person name="Neeno-Eckwall E."/>
            <person name="Perna N.T."/>
            <person name="Munk A.C."/>
            <person name="Tapia R."/>
            <person name="Green L.D."/>
            <person name="Rogers Y.C."/>
            <person name="Detter J.C."/>
            <person name="Bruce D.C."/>
            <person name="Brettin T.S."/>
        </authorList>
    </citation>
    <scope>NUCLEOTIDE SEQUENCE [LARGE SCALE GENOMIC DNA]</scope>
    <source>
        <strain>Nepal516</strain>
    </source>
</reference>
<comment type="function">
    <text evidence="1">Binds to 23S rRNA. Forms part of two intersubunit bridges in the 70S ribosome.</text>
</comment>
<comment type="subunit">
    <text evidence="1">Part of the 50S ribosomal subunit. Forms a cluster with proteins L3 and L19. In the 70S ribosome, L14 and L19 interact and together make contacts with the 16S rRNA in bridges B5 and B8.</text>
</comment>
<comment type="similarity">
    <text evidence="1">Belongs to the universal ribosomal protein uL14 family.</text>
</comment>
<organism>
    <name type="scientific">Yersinia pestis bv. Antiqua (strain Nepal516)</name>
    <dbReference type="NCBI Taxonomy" id="377628"/>
    <lineage>
        <taxon>Bacteria</taxon>
        <taxon>Pseudomonadati</taxon>
        <taxon>Pseudomonadota</taxon>
        <taxon>Gammaproteobacteria</taxon>
        <taxon>Enterobacterales</taxon>
        <taxon>Yersiniaceae</taxon>
        <taxon>Yersinia</taxon>
    </lineage>
</organism>
<accession>Q1CCV4</accession>
<accession>D1Q2L1</accession>
<sequence length="123" mass="13582">MIQEQTMLNVADNSGARRVMCIKVLGGSHRRYAGIGDIIKITIKEAIPRGKVKKGDVLKAVVVRTKKGVRRPDGSVIRFDGNACVILNNNSEQPIGTRIFGPVTRELRNEKFMKIISLAPEVL</sequence>
<proteinExistence type="inferred from homology"/>
<protein>
    <recommendedName>
        <fullName evidence="1">Large ribosomal subunit protein uL14</fullName>
    </recommendedName>
    <alternativeName>
        <fullName evidence="2">50S ribosomal protein L14</fullName>
    </alternativeName>
</protein>
<feature type="chain" id="PRO_0000266593" description="Large ribosomal subunit protein uL14">
    <location>
        <begin position="1"/>
        <end position="123"/>
    </location>
</feature>
<keyword id="KW-0687">Ribonucleoprotein</keyword>
<keyword id="KW-0689">Ribosomal protein</keyword>
<keyword id="KW-0694">RNA-binding</keyword>
<keyword id="KW-0699">rRNA-binding</keyword>